<reference key="1">
    <citation type="journal article" date="2008" name="PLoS ONE">
        <title>Genome biology of Actinobacillus pleuropneumoniae JL03, an isolate of serotype 3 prevalent in China.</title>
        <authorList>
            <person name="Xu Z."/>
            <person name="Zhou Y."/>
            <person name="Li L."/>
            <person name="Zhou R."/>
            <person name="Xiao S."/>
            <person name="Wan Y."/>
            <person name="Zhang S."/>
            <person name="Wang K."/>
            <person name="Li W."/>
            <person name="Li L."/>
            <person name="Jin H."/>
            <person name="Kang M."/>
            <person name="Dalai B."/>
            <person name="Li T."/>
            <person name="Liu L."/>
            <person name="Cheng Y."/>
            <person name="Zhang L."/>
            <person name="Xu T."/>
            <person name="Zheng H."/>
            <person name="Pu S."/>
            <person name="Wang B."/>
            <person name="Gu W."/>
            <person name="Zhang X.L."/>
            <person name="Zhu G.-F."/>
            <person name="Wang S."/>
            <person name="Zhao G.-P."/>
            <person name="Chen H."/>
        </authorList>
    </citation>
    <scope>NUCLEOTIDE SEQUENCE [LARGE SCALE GENOMIC DNA]</scope>
    <source>
        <strain>JL03</strain>
    </source>
</reference>
<sequence length="273" mass="30649">MPELPEVETSLRGVEPYLHGKIIKQIVVRTQKLRWAISDELQHMQGAKIVALSRRAKYLILHTTQGDILIHLGMSGSLGILQENQQPAGKHDHVDLITQDGTVLRYNDPRKFGCWLWTKNAEQHELITRLGPEPLSESFTAAYLFARSRNKTVAVKNFIMNNDIVVGVGNIYACESLFMAGLHPELAAQNLTEKQCERLVKVIKEVLAKAIIQGGTTLKDFIQPDGKPGYFAQVLQVYGRKDEACNDCGTIIEAKVIGQRNSYFCPHCQMLPR</sequence>
<feature type="initiator methionine" description="Removed" evidence="1">
    <location>
        <position position="1"/>
    </location>
</feature>
<feature type="chain" id="PRO_1000094028" description="Formamidopyrimidine-DNA glycosylase">
    <location>
        <begin position="2"/>
        <end position="273"/>
    </location>
</feature>
<feature type="zinc finger region" description="FPG-type" evidence="2">
    <location>
        <begin position="236"/>
        <end position="270"/>
    </location>
</feature>
<feature type="active site" description="Schiff-base intermediate with DNA" evidence="2">
    <location>
        <position position="2"/>
    </location>
</feature>
<feature type="active site" description="Proton donor" evidence="2">
    <location>
        <position position="3"/>
    </location>
</feature>
<feature type="active site" description="Proton donor; for beta-elimination activity" evidence="2">
    <location>
        <position position="57"/>
    </location>
</feature>
<feature type="active site" description="Proton donor; for delta-elimination activity" evidence="2">
    <location>
        <position position="260"/>
    </location>
</feature>
<feature type="binding site" evidence="2">
    <location>
        <position position="91"/>
    </location>
    <ligand>
        <name>DNA</name>
        <dbReference type="ChEBI" id="CHEBI:16991"/>
    </ligand>
</feature>
<feature type="binding site" evidence="2">
    <location>
        <position position="110"/>
    </location>
    <ligand>
        <name>DNA</name>
        <dbReference type="ChEBI" id="CHEBI:16991"/>
    </ligand>
</feature>
<feature type="binding site" evidence="2">
    <location>
        <position position="151"/>
    </location>
    <ligand>
        <name>DNA</name>
        <dbReference type="ChEBI" id="CHEBI:16991"/>
    </ligand>
</feature>
<organism>
    <name type="scientific">Actinobacillus pleuropneumoniae serotype 3 (strain JL03)</name>
    <dbReference type="NCBI Taxonomy" id="434271"/>
    <lineage>
        <taxon>Bacteria</taxon>
        <taxon>Pseudomonadati</taxon>
        <taxon>Pseudomonadota</taxon>
        <taxon>Gammaproteobacteria</taxon>
        <taxon>Pasteurellales</taxon>
        <taxon>Pasteurellaceae</taxon>
        <taxon>Actinobacillus</taxon>
    </lineage>
</organism>
<comment type="function">
    <text evidence="2">Involved in base excision repair of DNA damaged by oxidation or by mutagenic agents. Acts as a DNA glycosylase that recognizes and removes damaged bases. Has a preference for oxidized purines, such as 7,8-dihydro-8-oxoguanine (8-oxoG). Has AP (apurinic/apyrimidinic) lyase activity and introduces nicks in the DNA strand. Cleaves the DNA backbone by beta-delta elimination to generate a single-strand break at the site of the removed base with both 3'- and 5'-phosphates.</text>
</comment>
<comment type="catalytic activity">
    <reaction evidence="2">
        <text>Hydrolysis of DNA containing ring-opened 7-methylguanine residues, releasing 2,6-diamino-4-hydroxy-5-(N-methyl)formamidopyrimidine.</text>
        <dbReference type="EC" id="3.2.2.23"/>
    </reaction>
</comment>
<comment type="catalytic activity">
    <reaction evidence="2">
        <text>2'-deoxyribonucleotide-(2'-deoxyribose 5'-phosphate)-2'-deoxyribonucleotide-DNA = a 3'-end 2'-deoxyribonucleotide-(2,3-dehydro-2,3-deoxyribose 5'-phosphate)-DNA + a 5'-end 5'-phospho-2'-deoxyribonucleoside-DNA + H(+)</text>
        <dbReference type="Rhea" id="RHEA:66592"/>
        <dbReference type="Rhea" id="RHEA-COMP:13180"/>
        <dbReference type="Rhea" id="RHEA-COMP:16897"/>
        <dbReference type="Rhea" id="RHEA-COMP:17067"/>
        <dbReference type="ChEBI" id="CHEBI:15378"/>
        <dbReference type="ChEBI" id="CHEBI:136412"/>
        <dbReference type="ChEBI" id="CHEBI:157695"/>
        <dbReference type="ChEBI" id="CHEBI:167181"/>
        <dbReference type="EC" id="4.2.99.18"/>
    </reaction>
</comment>
<comment type="cofactor">
    <cofactor evidence="2">
        <name>Zn(2+)</name>
        <dbReference type="ChEBI" id="CHEBI:29105"/>
    </cofactor>
    <text evidence="2">Binds 1 zinc ion per subunit.</text>
</comment>
<comment type="subunit">
    <text evidence="2">Monomer.</text>
</comment>
<comment type="similarity">
    <text evidence="2">Belongs to the FPG family.</text>
</comment>
<accession>B0BU16</accession>
<protein>
    <recommendedName>
        <fullName evidence="2">Formamidopyrimidine-DNA glycosylase</fullName>
        <shortName evidence="2">Fapy-DNA glycosylase</shortName>
        <ecNumber evidence="2">3.2.2.23</ecNumber>
    </recommendedName>
    <alternativeName>
        <fullName evidence="2">DNA-(apurinic or apyrimidinic site) lyase MutM</fullName>
        <shortName evidence="2">AP lyase MutM</shortName>
        <ecNumber evidence="2">4.2.99.18</ecNumber>
    </alternativeName>
</protein>
<gene>
    <name evidence="2" type="primary">mutM</name>
    <name evidence="2" type="synonym">fpg</name>
    <name type="ordered locus">APJL_2038</name>
</gene>
<keyword id="KW-0227">DNA damage</keyword>
<keyword id="KW-0234">DNA repair</keyword>
<keyword id="KW-0238">DNA-binding</keyword>
<keyword id="KW-0326">Glycosidase</keyword>
<keyword id="KW-0378">Hydrolase</keyword>
<keyword id="KW-0456">Lyase</keyword>
<keyword id="KW-0479">Metal-binding</keyword>
<keyword id="KW-0511">Multifunctional enzyme</keyword>
<keyword id="KW-0862">Zinc</keyword>
<keyword id="KW-0863">Zinc-finger</keyword>
<dbReference type="EC" id="3.2.2.23" evidence="2"/>
<dbReference type="EC" id="4.2.99.18" evidence="2"/>
<dbReference type="EMBL" id="CP000687">
    <property type="protein sequence ID" value="ABY70583.1"/>
    <property type="molecule type" value="Genomic_DNA"/>
</dbReference>
<dbReference type="RefSeq" id="WP_005609416.1">
    <property type="nucleotide sequence ID" value="NC_010278.1"/>
</dbReference>
<dbReference type="SMR" id="B0BU16"/>
<dbReference type="KEGG" id="apj:APJL_2038"/>
<dbReference type="HOGENOM" id="CLU_038423_1_1_6"/>
<dbReference type="Proteomes" id="UP000008547">
    <property type="component" value="Chromosome"/>
</dbReference>
<dbReference type="GO" id="GO:0034039">
    <property type="term" value="F:8-oxo-7,8-dihydroguanine DNA N-glycosylase activity"/>
    <property type="evidence" value="ECO:0007669"/>
    <property type="project" value="TreeGrafter"/>
</dbReference>
<dbReference type="GO" id="GO:0140078">
    <property type="term" value="F:class I DNA-(apurinic or apyrimidinic site) endonuclease activity"/>
    <property type="evidence" value="ECO:0007669"/>
    <property type="project" value="UniProtKB-EC"/>
</dbReference>
<dbReference type="GO" id="GO:0003684">
    <property type="term" value="F:damaged DNA binding"/>
    <property type="evidence" value="ECO:0007669"/>
    <property type="project" value="InterPro"/>
</dbReference>
<dbReference type="GO" id="GO:0008270">
    <property type="term" value="F:zinc ion binding"/>
    <property type="evidence" value="ECO:0007669"/>
    <property type="project" value="UniProtKB-UniRule"/>
</dbReference>
<dbReference type="GO" id="GO:0006284">
    <property type="term" value="P:base-excision repair"/>
    <property type="evidence" value="ECO:0007669"/>
    <property type="project" value="InterPro"/>
</dbReference>
<dbReference type="CDD" id="cd08966">
    <property type="entry name" value="EcFpg-like_N"/>
    <property type="match status" value="1"/>
</dbReference>
<dbReference type="FunFam" id="1.10.8.50:FF:000003">
    <property type="entry name" value="Formamidopyrimidine-DNA glycosylase"/>
    <property type="match status" value="1"/>
</dbReference>
<dbReference type="FunFam" id="3.20.190.10:FF:000001">
    <property type="entry name" value="Formamidopyrimidine-DNA glycosylase"/>
    <property type="match status" value="1"/>
</dbReference>
<dbReference type="Gene3D" id="1.10.8.50">
    <property type="match status" value="1"/>
</dbReference>
<dbReference type="Gene3D" id="3.20.190.10">
    <property type="entry name" value="MutM-like, N-terminal"/>
    <property type="match status" value="1"/>
</dbReference>
<dbReference type="HAMAP" id="MF_00103">
    <property type="entry name" value="Fapy_DNA_glycosyl"/>
    <property type="match status" value="1"/>
</dbReference>
<dbReference type="InterPro" id="IPR015886">
    <property type="entry name" value="DNA_glyclase/AP_lyase_DNA-bd"/>
</dbReference>
<dbReference type="InterPro" id="IPR015887">
    <property type="entry name" value="DNA_glyclase_Znf_dom_DNA_BS"/>
</dbReference>
<dbReference type="InterPro" id="IPR020629">
    <property type="entry name" value="Formamido-pyr_DNA_Glyclase"/>
</dbReference>
<dbReference type="InterPro" id="IPR012319">
    <property type="entry name" value="FPG_cat"/>
</dbReference>
<dbReference type="InterPro" id="IPR035937">
    <property type="entry name" value="MutM-like_N-ter"/>
</dbReference>
<dbReference type="InterPro" id="IPR010979">
    <property type="entry name" value="Ribosomal_uS13-like_H2TH"/>
</dbReference>
<dbReference type="InterPro" id="IPR000214">
    <property type="entry name" value="Znf_DNA_glyclase/AP_lyase"/>
</dbReference>
<dbReference type="InterPro" id="IPR010663">
    <property type="entry name" value="Znf_FPG/IleRS"/>
</dbReference>
<dbReference type="NCBIfam" id="TIGR00577">
    <property type="entry name" value="fpg"/>
    <property type="match status" value="1"/>
</dbReference>
<dbReference type="NCBIfam" id="NF002211">
    <property type="entry name" value="PRK01103.1"/>
    <property type="match status" value="1"/>
</dbReference>
<dbReference type="PANTHER" id="PTHR22993">
    <property type="entry name" value="FORMAMIDOPYRIMIDINE-DNA GLYCOSYLASE"/>
    <property type="match status" value="1"/>
</dbReference>
<dbReference type="PANTHER" id="PTHR22993:SF9">
    <property type="entry name" value="FORMAMIDOPYRIMIDINE-DNA GLYCOSYLASE"/>
    <property type="match status" value="1"/>
</dbReference>
<dbReference type="Pfam" id="PF01149">
    <property type="entry name" value="Fapy_DNA_glyco"/>
    <property type="match status" value="1"/>
</dbReference>
<dbReference type="Pfam" id="PF06831">
    <property type="entry name" value="H2TH"/>
    <property type="match status" value="1"/>
</dbReference>
<dbReference type="Pfam" id="PF06827">
    <property type="entry name" value="zf-FPG_IleRS"/>
    <property type="match status" value="1"/>
</dbReference>
<dbReference type="SMART" id="SM00898">
    <property type="entry name" value="Fapy_DNA_glyco"/>
    <property type="match status" value="1"/>
</dbReference>
<dbReference type="SMART" id="SM01232">
    <property type="entry name" value="H2TH"/>
    <property type="match status" value="1"/>
</dbReference>
<dbReference type="SUPFAM" id="SSF57716">
    <property type="entry name" value="Glucocorticoid receptor-like (DNA-binding domain)"/>
    <property type="match status" value="1"/>
</dbReference>
<dbReference type="SUPFAM" id="SSF81624">
    <property type="entry name" value="N-terminal domain of MutM-like DNA repair proteins"/>
    <property type="match status" value="1"/>
</dbReference>
<dbReference type="SUPFAM" id="SSF46946">
    <property type="entry name" value="S13-like H2TH domain"/>
    <property type="match status" value="1"/>
</dbReference>
<dbReference type="PROSITE" id="PS51068">
    <property type="entry name" value="FPG_CAT"/>
    <property type="match status" value="1"/>
</dbReference>
<dbReference type="PROSITE" id="PS01242">
    <property type="entry name" value="ZF_FPG_1"/>
    <property type="match status" value="1"/>
</dbReference>
<dbReference type="PROSITE" id="PS51066">
    <property type="entry name" value="ZF_FPG_2"/>
    <property type="match status" value="1"/>
</dbReference>
<proteinExistence type="inferred from homology"/>
<evidence type="ECO:0000250" key="1"/>
<evidence type="ECO:0000255" key="2">
    <source>
        <dbReference type="HAMAP-Rule" id="MF_00103"/>
    </source>
</evidence>
<name>FPG_ACTPJ</name>